<comment type="function">
    <text evidence="3">May transfer electrons to the iron-sulfur centers of DdhB.</text>
</comment>
<comment type="cofactor">
    <cofactor evidence="4">
        <name>heme b</name>
        <dbReference type="ChEBI" id="CHEBI:60344"/>
    </cofactor>
    <text evidence="4">Binds 1 heme b (iron(II)-protoporphyrin IX) group per subunit.</text>
</comment>
<comment type="subunit">
    <text evidence="3">Heterotrimer of alpha, beta and gamma subunits.</text>
</comment>
<comment type="subcellular location">
    <subcellularLocation>
        <location>Periplasm</location>
    </subcellularLocation>
</comment>
<accession>Q8GPG1</accession>
<gene>
    <name type="primary">ddhC</name>
</gene>
<proteinExistence type="evidence at protein level"/>
<dbReference type="EMBL" id="AF453479">
    <property type="protein sequence ID" value="AAN46635.1"/>
    <property type="molecule type" value="Genomic_DNA"/>
</dbReference>
<dbReference type="SMR" id="Q8GPG1"/>
<dbReference type="STRING" id="35806.A6024_07050"/>
<dbReference type="KEGG" id="ag:AAN46635"/>
<dbReference type="eggNOG" id="COG2010">
    <property type="taxonomic scope" value="Bacteria"/>
</dbReference>
<dbReference type="BioCyc" id="MetaCyc:MONOMER-14244"/>
<dbReference type="BRENDA" id="1.8.2.4">
    <property type="organism ID" value="5384"/>
</dbReference>
<dbReference type="GO" id="GO:0042597">
    <property type="term" value="C:periplasmic space"/>
    <property type="evidence" value="ECO:0007669"/>
    <property type="project" value="UniProtKB-SubCell"/>
</dbReference>
<dbReference type="GO" id="GO:0020037">
    <property type="term" value="F:heme binding"/>
    <property type="evidence" value="ECO:0007669"/>
    <property type="project" value="InterPro"/>
</dbReference>
<dbReference type="GO" id="GO:0046872">
    <property type="term" value="F:metal ion binding"/>
    <property type="evidence" value="ECO:0007669"/>
    <property type="project" value="UniProtKB-KW"/>
</dbReference>
<dbReference type="CDD" id="cd09623">
    <property type="entry name" value="DOMON_EBDH"/>
    <property type="match status" value="1"/>
</dbReference>
<dbReference type="Gene3D" id="2.60.40.1190">
    <property type="match status" value="1"/>
</dbReference>
<dbReference type="InterPro" id="IPR019020">
    <property type="entry name" value="Cyt-c552/DMSO_Rdtase_haem-bd"/>
</dbReference>
<dbReference type="InterPro" id="IPR017838">
    <property type="entry name" value="DMSO_Rdtase_II_haem_b-bd_su"/>
</dbReference>
<dbReference type="NCBIfam" id="TIGR03477">
    <property type="entry name" value="DMSO_red_II_gam"/>
    <property type="match status" value="1"/>
</dbReference>
<dbReference type="Pfam" id="PF09459">
    <property type="entry name" value="EB_dh"/>
    <property type="match status" value="1"/>
</dbReference>
<feature type="signal peptide" evidence="2">
    <location>
        <begin position="1"/>
        <end position="25"/>
    </location>
</feature>
<feature type="chain" id="PRO_0000021095" description="Dimethylsulfide dehydrogenase subunit gamma">
    <location>
        <begin position="26"/>
        <end position="265"/>
    </location>
</feature>
<feature type="binding site" description="axial binding residue" evidence="1">
    <location>
        <position position="81"/>
    </location>
    <ligand>
        <name>heme b</name>
        <dbReference type="ChEBI" id="CHEBI:60344"/>
    </ligand>
    <ligandPart>
        <name>Fe</name>
        <dbReference type="ChEBI" id="CHEBI:18248"/>
    </ligandPart>
</feature>
<feature type="binding site" description="axial binding residue" evidence="1">
    <location>
        <position position="147"/>
    </location>
    <ligand>
        <name>heme b</name>
        <dbReference type="ChEBI" id="CHEBI:60344"/>
    </ligand>
    <ligandPart>
        <name>Fe</name>
        <dbReference type="ChEBI" id="CHEBI:18248"/>
    </ligandPart>
</feature>
<name>DDHC_RHOSU</name>
<organism>
    <name type="scientific">Rhodovulum sulfidophilum</name>
    <name type="common">Rhodobacter sulfidophilus</name>
    <dbReference type="NCBI Taxonomy" id="35806"/>
    <lineage>
        <taxon>Bacteria</taxon>
        <taxon>Pseudomonadati</taxon>
        <taxon>Pseudomonadota</taxon>
        <taxon>Alphaproteobacteria</taxon>
        <taxon>Rhodobacterales</taxon>
        <taxon>Paracoccaceae</taxon>
        <taxon>Rhodovulum</taxon>
    </lineage>
</organism>
<protein>
    <recommendedName>
        <fullName>Dimethylsulfide dehydrogenase subunit gamma</fullName>
        <shortName>DMS DH subunit gamma</shortName>
    </recommendedName>
    <alternativeName>
        <fullName>DMS DH heme subunit</fullName>
    </alternativeName>
    <alternativeName>
        <fullName>Dimethyl sulfide:cytochrome c2 reductase subunit beta</fullName>
    </alternativeName>
    <alternativeName>
        <fullName>Dimethylsulfide heme subunit</fullName>
    </alternativeName>
</protein>
<reference key="1">
    <citation type="journal article" date="2002" name="Mol. Microbiol.">
        <title>Molecular analysis of dimethyl sulphide dehydrogenase from Rhodovulum sulfidophilum: its place in the dimethyl sulphoxide reductase family of microbial molybdopterin-containing enzymes.</title>
        <authorList>
            <person name="McDevitt C.A."/>
            <person name="Hugenholtz P."/>
            <person name="Hanson G.R."/>
            <person name="McEwan A.G."/>
        </authorList>
    </citation>
    <scope>NUCLEOTIDE SEQUENCE [GENOMIC DNA]</scope>
    <scope>PROTEIN SEQUENCE OF 26-35</scope>
    <source>
        <strain>SH1</strain>
    </source>
</reference>
<reference key="2">
    <citation type="journal article" date="1996" name="Eur. J. Biochem.">
        <title>Dimethylsulfide:acceptor oxidoreductase from Rhodobacter sulfidophilus. The purified enzyme contains b-type haem and a pterin molybdenum cofactor.</title>
        <authorList>
            <person name="Hanlon S.P."/>
            <person name="Toh T.H."/>
            <person name="Solomon P.S."/>
            <person name="Holt R.A."/>
            <person name="McEwan A.G."/>
        </authorList>
    </citation>
    <scope>FUNCTION</scope>
    <scope>SUBUNIT</scope>
    <scope>COFACTOR</scope>
</reference>
<evidence type="ECO:0000255" key="1"/>
<evidence type="ECO:0000269" key="2">
    <source>
    </source>
</evidence>
<evidence type="ECO:0000269" key="3">
    <source>
    </source>
</evidence>
<evidence type="ECO:0000305" key="4"/>
<sequence length="265" mass="29499">MPGFRFLLAATAAFLATSPALPLSADSLNAGNIRLVDPEETVPVIKIPDGIYLRTPNDPDDIIWARVPEFRVEMVMAPPVHPSVGLRYRDEYPEQDLVVQLARTSERFYVRLRWVDPTRDMSTLRDRFRDGAAIEFSESDDSVSYMMGTDAESPVNIWYWHPDGDRVESLAAGSPGSLTRLDRQPVTGASEYRTGHGPDDSQWIVVMSRPLASEGDHQVSFERDTIPVAFALWQGADAQRDGLKLVSLNWIFARMTPDAAPAPGN</sequence>
<keyword id="KW-0903">Direct protein sequencing</keyword>
<keyword id="KW-0249">Electron transport</keyword>
<keyword id="KW-0349">Heme</keyword>
<keyword id="KW-0408">Iron</keyword>
<keyword id="KW-0479">Metal-binding</keyword>
<keyword id="KW-0574">Periplasm</keyword>
<keyword id="KW-0732">Signal</keyword>
<keyword id="KW-0813">Transport</keyword>